<proteinExistence type="evidence at protein level"/>
<reference evidence="5" key="1">
    <citation type="journal article" date="2009" name="Appl. Biochem. Biotechnol.">
        <title>Characterization of unique and differentially expressed proteins in anthracnose-tolerant Florida hybrid bunch grapes.</title>
        <authorList>
            <person name="Vasanthaiah H.K.N."/>
            <person name="Katam R."/>
            <person name="Basha S.M."/>
        </authorList>
    </citation>
    <scope>PROTEIN SEQUENCE</scope>
    <scope>INDUCTION</scope>
    <source>
        <strain evidence="3">V.simpsonii cv. Pixiola X V.vinifera cv. Golden Muscat</strain>
        <tissue evidence="3">Leaf</tissue>
    </source>
</reference>
<protein>
    <recommendedName>
        <fullName>Ribulose bisphosphate carboxylase large chain</fullName>
        <shortName>RuBisCO large subunit</shortName>
        <ecNumber>4.1.1.39</ecNumber>
    </recommendedName>
</protein>
<sequence>LTYYTPEYETKGLLLHXHRMSGGDHIHAGXVVGKEITLGFVDLLRVALEACVQAR</sequence>
<organism>
    <name type="scientific">Vitis sp.</name>
    <name type="common">Grape</name>
    <dbReference type="NCBI Taxonomy" id="3604"/>
    <lineage>
        <taxon>Eukaryota</taxon>
        <taxon>Viridiplantae</taxon>
        <taxon>Streptophyta</taxon>
        <taxon>Embryophyta</taxon>
        <taxon>Tracheophyta</taxon>
        <taxon>Spermatophyta</taxon>
        <taxon>Magnoliopsida</taxon>
        <taxon>eudicotyledons</taxon>
        <taxon>Gunneridae</taxon>
        <taxon>Pentapetalae</taxon>
        <taxon>rosids</taxon>
        <taxon>Vitales</taxon>
        <taxon>Vitaceae</taxon>
        <taxon>Viteae</taxon>
        <taxon>Vitis</taxon>
    </lineage>
</organism>
<comment type="function">
    <text evidence="1">RuBisCO catalyzes two reactions: the carboxylation of D-ribulose 1,5-bisphosphate, the primary event in carbon dioxide fixation, as well as the oxidative fragmentation of the pentose substrate in the photorespiration process. Both reactions occur simultaneously and in competition at the same active site (By similarity).</text>
</comment>
<comment type="catalytic activity">
    <reaction evidence="1">
        <text>2 (2R)-3-phosphoglycerate + 2 H(+) = D-ribulose 1,5-bisphosphate + CO2 + H2O</text>
        <dbReference type="Rhea" id="RHEA:23124"/>
        <dbReference type="ChEBI" id="CHEBI:15377"/>
        <dbReference type="ChEBI" id="CHEBI:15378"/>
        <dbReference type="ChEBI" id="CHEBI:16526"/>
        <dbReference type="ChEBI" id="CHEBI:57870"/>
        <dbReference type="ChEBI" id="CHEBI:58272"/>
        <dbReference type="EC" id="4.1.1.39"/>
    </reaction>
</comment>
<comment type="catalytic activity">
    <reaction evidence="1">
        <text>D-ribulose 1,5-bisphosphate + O2 = 2-phosphoglycolate + (2R)-3-phosphoglycerate + 2 H(+)</text>
        <dbReference type="Rhea" id="RHEA:36631"/>
        <dbReference type="ChEBI" id="CHEBI:15378"/>
        <dbReference type="ChEBI" id="CHEBI:15379"/>
        <dbReference type="ChEBI" id="CHEBI:57870"/>
        <dbReference type="ChEBI" id="CHEBI:58033"/>
        <dbReference type="ChEBI" id="CHEBI:58272"/>
    </reaction>
</comment>
<comment type="cofactor">
    <cofactor evidence="1">
        <name>Mg(2+)</name>
        <dbReference type="ChEBI" id="CHEBI:18420"/>
    </cofactor>
    <text evidence="1">Binds 1 Mg(2+) ion per subunit.</text>
</comment>
<comment type="subunit">
    <text evidence="1">Heterohexadecamer of 8 large chains and 8 small chains; disulfide-linked. The disulfide link is formed within the large subunit homodimers (By similarity).</text>
</comment>
<comment type="subcellular location">
    <subcellularLocation>
        <location>Plastid</location>
        <location>Chloroplast</location>
    </subcellularLocation>
</comment>
<comment type="induction">
    <text evidence="3">By E.ampelina infection.</text>
</comment>
<comment type="PTM">
    <text evidence="1">The disulfide bond which can form in the large chain dimeric partners within the hexadecamer appears to be associated with oxidative stress and protein turnover.</text>
</comment>
<comment type="miscellaneous">
    <text evidence="1">The basic functional RuBisCO is composed of a large chain homodimer in a 'head-to-tail' conformation. In form I RuBisCO this homodimer is arranged in a barrel-like tetramer with the small subunits forming a tetrameric 'cap' on each end of the 'barrel' (By similarity).</text>
</comment>
<comment type="similarity">
    <text evidence="2">Belongs to the RuBisCO large chain family. Type I subfamily.</text>
</comment>
<accession>P85085</accession>
<feature type="chain" id="PRO_0000280227" description="Ribulose bisphosphate carboxylase large chain">
    <location>
        <begin position="1" status="less than"/>
        <end position="55" status="greater than"/>
    </location>
</feature>
<feature type="active site" description="Proton acceptor" evidence="1">
    <location>
        <position position="18"/>
    </location>
</feature>
<feature type="binding site" evidence="1">
    <location>
        <position position="19"/>
    </location>
    <ligand>
        <name>substrate</name>
    </ligand>
</feature>
<feature type="binding site" evidence="1">
    <location>
        <position position="27"/>
    </location>
    <ligand>
        <name>substrate</name>
    </ligand>
</feature>
<feature type="site" description="Transition state stabilizer" evidence="1">
    <location>
        <position position="34"/>
    </location>
</feature>
<feature type="non-consecutive residues" evidence="4">
    <location>
        <begin position="11"/>
        <end position="12"/>
    </location>
</feature>
<feature type="non-consecutive residues" evidence="4">
    <location>
        <begin position="19"/>
        <end position="20"/>
    </location>
</feature>
<feature type="non-consecutive residues" evidence="4">
    <location>
        <begin position="34"/>
        <end position="35"/>
    </location>
</feature>
<feature type="non-consecutive residues" evidence="4">
    <location>
        <begin position="45"/>
        <end position="46"/>
    </location>
</feature>
<feature type="non-terminal residue" evidence="4">
    <location>
        <position position="1"/>
    </location>
</feature>
<feature type="non-terminal residue" evidence="4">
    <location>
        <position position="55"/>
    </location>
</feature>
<keyword id="KW-0113">Calvin cycle</keyword>
<keyword id="KW-0120">Carbon dioxide fixation</keyword>
<keyword id="KW-0150">Chloroplast</keyword>
<keyword id="KW-0903">Direct protein sequencing</keyword>
<keyword id="KW-1015">Disulfide bond</keyword>
<keyword id="KW-0456">Lyase</keyword>
<keyword id="KW-0460">Magnesium</keyword>
<keyword id="KW-0479">Metal-binding</keyword>
<keyword id="KW-0488">Methylation</keyword>
<keyword id="KW-0503">Monooxygenase</keyword>
<keyword id="KW-0560">Oxidoreductase</keyword>
<keyword id="KW-0601">Photorespiration</keyword>
<keyword id="KW-0602">Photosynthesis</keyword>
<keyword id="KW-0934">Plastid</keyword>
<gene>
    <name evidence="1" type="primary">rbcL</name>
</gene>
<dbReference type="EC" id="4.1.1.39"/>
<dbReference type="GO" id="GO:0009507">
    <property type="term" value="C:chloroplast"/>
    <property type="evidence" value="ECO:0007669"/>
    <property type="project" value="UniProtKB-SubCell"/>
</dbReference>
<dbReference type="GO" id="GO:0000287">
    <property type="term" value="F:magnesium ion binding"/>
    <property type="evidence" value="ECO:0007669"/>
    <property type="project" value="InterPro"/>
</dbReference>
<dbReference type="GO" id="GO:0004497">
    <property type="term" value="F:monooxygenase activity"/>
    <property type="evidence" value="ECO:0007669"/>
    <property type="project" value="UniProtKB-KW"/>
</dbReference>
<dbReference type="GO" id="GO:0016984">
    <property type="term" value="F:ribulose-bisphosphate carboxylase activity"/>
    <property type="evidence" value="ECO:0007669"/>
    <property type="project" value="UniProtKB-EC"/>
</dbReference>
<dbReference type="GO" id="GO:0009853">
    <property type="term" value="P:photorespiration"/>
    <property type="evidence" value="ECO:0007669"/>
    <property type="project" value="UniProtKB-KW"/>
</dbReference>
<dbReference type="GO" id="GO:0019253">
    <property type="term" value="P:reductive pentose-phosphate cycle"/>
    <property type="evidence" value="ECO:0007669"/>
    <property type="project" value="UniProtKB-KW"/>
</dbReference>
<dbReference type="InterPro" id="IPR036376">
    <property type="entry name" value="RuBisCO_lsu_C_sf"/>
</dbReference>
<dbReference type="SUPFAM" id="SSF51649">
    <property type="entry name" value="RuBisCo, C-terminal domain"/>
    <property type="match status" value="1"/>
</dbReference>
<name>RBL_VITSX</name>
<geneLocation type="chloroplast"/>
<evidence type="ECO:0000250" key="1">
    <source>
        <dbReference type="UniProtKB" id="P00876"/>
    </source>
</evidence>
<evidence type="ECO:0000255" key="2"/>
<evidence type="ECO:0000269" key="3">
    <source>
    </source>
</evidence>
<evidence type="ECO:0000303" key="4">
    <source>
    </source>
</evidence>
<evidence type="ECO:0000305" key="5"/>